<sequence length="236" mass="26420">MRSIQQNIEHITAQIESAQQKCGRARSSVQLLAVSKTKPVEAILEATQAGQRYFGENYVQEGVDKIRYFAEHHPQLALEWHFIGPLQSNKTRLVAEHFDWVHTIDREKIALRLSEQRPVNMPPLQVLIQVNTSGEASKSGIEPQQLFTLAELISRLPNLTLRGLMSIPENVPDYPAQLAAFTQLAELQQQLAQKYPQIDTLSMGMSGDMQAAIEAGSTIVRIGTAIFGERDYSRNA</sequence>
<proteinExistence type="inferred from homology"/>
<feature type="chain" id="PRO_0000163209" description="Pyridoxal phosphate homeostasis protein">
    <location>
        <begin position="1"/>
        <end position="236"/>
    </location>
</feature>
<feature type="modified residue" description="N6-(pyridoxal phosphate)lysine" evidence="1">
    <location>
        <position position="36"/>
    </location>
</feature>
<name>PLPHP_VIBCH</name>
<organism>
    <name type="scientific">Vibrio cholerae serotype O1 (strain ATCC 39315 / El Tor Inaba N16961)</name>
    <dbReference type="NCBI Taxonomy" id="243277"/>
    <lineage>
        <taxon>Bacteria</taxon>
        <taxon>Pseudomonadati</taxon>
        <taxon>Pseudomonadota</taxon>
        <taxon>Gammaproteobacteria</taxon>
        <taxon>Vibrionales</taxon>
        <taxon>Vibrionaceae</taxon>
        <taxon>Vibrio</taxon>
    </lineage>
</organism>
<comment type="function">
    <text evidence="1">Pyridoxal 5'-phosphate (PLP)-binding protein, which is involved in PLP homeostasis.</text>
</comment>
<comment type="similarity">
    <text evidence="1">Belongs to the pyridoxal phosphate-binding protein YggS/PROSC family.</text>
</comment>
<gene>
    <name type="ordered locus">VC_0461</name>
</gene>
<evidence type="ECO:0000255" key="1">
    <source>
        <dbReference type="HAMAP-Rule" id="MF_02087"/>
    </source>
</evidence>
<dbReference type="EMBL" id="AE003852">
    <property type="protein sequence ID" value="AAF93634.1"/>
    <property type="molecule type" value="Genomic_DNA"/>
</dbReference>
<dbReference type="PIR" id="E82321">
    <property type="entry name" value="E82321"/>
</dbReference>
<dbReference type="RefSeq" id="NP_230115.1">
    <property type="nucleotide sequence ID" value="NC_002505.1"/>
</dbReference>
<dbReference type="RefSeq" id="WP_001256653.1">
    <property type="nucleotide sequence ID" value="NZ_LT906614.1"/>
</dbReference>
<dbReference type="SMR" id="Q9KUQ4"/>
<dbReference type="STRING" id="243277.VC_0461"/>
<dbReference type="DNASU" id="2615123"/>
<dbReference type="EnsemblBacteria" id="AAF93634">
    <property type="protein sequence ID" value="AAF93634"/>
    <property type="gene ID" value="VC_0461"/>
</dbReference>
<dbReference type="KEGG" id="vch:VC_0461"/>
<dbReference type="PATRIC" id="fig|243277.26.peg.434"/>
<dbReference type="eggNOG" id="COG0325">
    <property type="taxonomic scope" value="Bacteria"/>
</dbReference>
<dbReference type="HOGENOM" id="CLU_059988_0_1_6"/>
<dbReference type="Proteomes" id="UP000000584">
    <property type="component" value="Chromosome 1"/>
</dbReference>
<dbReference type="GO" id="GO:0005737">
    <property type="term" value="C:cytoplasm"/>
    <property type="evidence" value="ECO:0000318"/>
    <property type="project" value="GO_Central"/>
</dbReference>
<dbReference type="GO" id="GO:0030170">
    <property type="term" value="F:pyridoxal phosphate binding"/>
    <property type="evidence" value="ECO:0000318"/>
    <property type="project" value="GO_Central"/>
</dbReference>
<dbReference type="CDD" id="cd06824">
    <property type="entry name" value="PLPDE_III_Yggs_like"/>
    <property type="match status" value="1"/>
</dbReference>
<dbReference type="FunFam" id="3.20.20.10:FF:000004">
    <property type="entry name" value="Pyridoxal phosphate homeostasis protein"/>
    <property type="match status" value="1"/>
</dbReference>
<dbReference type="Gene3D" id="3.20.20.10">
    <property type="entry name" value="Alanine racemase"/>
    <property type="match status" value="1"/>
</dbReference>
<dbReference type="HAMAP" id="MF_02087">
    <property type="entry name" value="PLP_homeostasis"/>
    <property type="match status" value="1"/>
</dbReference>
<dbReference type="InterPro" id="IPR001608">
    <property type="entry name" value="Ala_racemase_N"/>
</dbReference>
<dbReference type="InterPro" id="IPR029066">
    <property type="entry name" value="PLP-binding_barrel"/>
</dbReference>
<dbReference type="InterPro" id="IPR011078">
    <property type="entry name" value="PyrdxlP_homeostasis"/>
</dbReference>
<dbReference type="NCBIfam" id="TIGR00044">
    <property type="entry name" value="YggS family pyridoxal phosphate-dependent enzyme"/>
    <property type="match status" value="1"/>
</dbReference>
<dbReference type="PANTHER" id="PTHR10146">
    <property type="entry name" value="PROLINE SYNTHETASE CO-TRANSCRIBED BACTERIAL HOMOLOG PROTEIN"/>
    <property type="match status" value="1"/>
</dbReference>
<dbReference type="PANTHER" id="PTHR10146:SF14">
    <property type="entry name" value="PYRIDOXAL PHOSPHATE HOMEOSTASIS PROTEIN"/>
    <property type="match status" value="1"/>
</dbReference>
<dbReference type="Pfam" id="PF01168">
    <property type="entry name" value="Ala_racemase_N"/>
    <property type="match status" value="1"/>
</dbReference>
<dbReference type="PIRSF" id="PIRSF004848">
    <property type="entry name" value="YBL036c_PLPDEIII"/>
    <property type="match status" value="1"/>
</dbReference>
<dbReference type="SUPFAM" id="SSF51419">
    <property type="entry name" value="PLP-binding barrel"/>
    <property type="match status" value="1"/>
</dbReference>
<dbReference type="PROSITE" id="PS01211">
    <property type="entry name" value="UPF0001"/>
    <property type="match status" value="1"/>
</dbReference>
<accession>Q9KUQ4</accession>
<reference key="1">
    <citation type="journal article" date="2000" name="Nature">
        <title>DNA sequence of both chromosomes of the cholera pathogen Vibrio cholerae.</title>
        <authorList>
            <person name="Heidelberg J.F."/>
            <person name="Eisen J.A."/>
            <person name="Nelson W.C."/>
            <person name="Clayton R.A."/>
            <person name="Gwinn M.L."/>
            <person name="Dodson R.J."/>
            <person name="Haft D.H."/>
            <person name="Hickey E.K."/>
            <person name="Peterson J.D."/>
            <person name="Umayam L.A."/>
            <person name="Gill S.R."/>
            <person name="Nelson K.E."/>
            <person name="Read T.D."/>
            <person name="Tettelin H."/>
            <person name="Richardson D.L."/>
            <person name="Ermolaeva M.D."/>
            <person name="Vamathevan J.J."/>
            <person name="Bass S."/>
            <person name="Qin H."/>
            <person name="Dragoi I."/>
            <person name="Sellers P."/>
            <person name="McDonald L.A."/>
            <person name="Utterback T.R."/>
            <person name="Fleischmann R.D."/>
            <person name="Nierman W.C."/>
            <person name="White O."/>
            <person name="Salzberg S.L."/>
            <person name="Smith H.O."/>
            <person name="Colwell R.R."/>
            <person name="Mekalanos J.J."/>
            <person name="Venter J.C."/>
            <person name="Fraser C.M."/>
        </authorList>
    </citation>
    <scope>NUCLEOTIDE SEQUENCE [LARGE SCALE GENOMIC DNA]</scope>
    <source>
        <strain>ATCC 39315 / El Tor Inaba N16961</strain>
    </source>
</reference>
<protein>
    <recommendedName>
        <fullName evidence="1">Pyridoxal phosphate homeostasis protein</fullName>
        <shortName evidence="1">PLP homeostasis protein</shortName>
    </recommendedName>
</protein>
<keyword id="KW-0663">Pyridoxal phosphate</keyword>
<keyword id="KW-1185">Reference proteome</keyword>